<feature type="chain" id="PRO_0000074508" description="Na(+)-translocating NADH-quinone reductase subunit F">
    <location>
        <begin position="1" status="less than"/>
        <end position="303" status="greater than"/>
    </location>
</feature>
<feature type="domain" description="2Fe-2S ferredoxin-type" evidence="3">
    <location>
        <begin position="1" status="less than"/>
        <end position="55"/>
    </location>
</feature>
<feature type="domain" description="FAD-binding FR-type" evidence="4">
    <location>
        <begin position="58"/>
        <end position="198"/>
    </location>
</feature>
<feature type="region of interest" description="Catalytic">
    <location>
        <begin position="201"/>
        <end position="303" status="greater than"/>
    </location>
</feature>
<feature type="binding site" evidence="3">
    <location>
        <position position="4"/>
    </location>
    <ligand>
        <name>[2Fe-2S] cluster</name>
        <dbReference type="ChEBI" id="CHEBI:190135"/>
    </ligand>
</feature>
<feature type="binding site" evidence="3">
    <location>
        <position position="7"/>
    </location>
    <ligand>
        <name>[2Fe-2S] cluster</name>
        <dbReference type="ChEBI" id="CHEBI:190135"/>
    </ligand>
</feature>
<feature type="binding site" evidence="3">
    <location>
        <position position="39"/>
    </location>
    <ligand>
        <name>[2Fe-2S] cluster</name>
        <dbReference type="ChEBI" id="CHEBI:190135"/>
    </ligand>
</feature>
<feature type="non-terminal residue">
    <location>
        <position position="1"/>
    </location>
</feature>
<feature type="non-terminal residue">
    <location>
        <position position="303"/>
    </location>
</feature>
<gene>
    <name type="primary">nqrF</name>
    <name type="synonym">nqr6</name>
</gene>
<proteinExistence type="inferred from homology"/>
<comment type="function">
    <text evidence="2">NQR complex catalyzes the reduction of ubiquinone-1 to ubiquinol by two successive reactions, coupled with the transport of Na(+) ions from the cytoplasm to the periplasm. The first step is catalyzed by NqrF, which accepts electrons from NADH and reduces ubiquinone-1 to ubisemiquinone by a one-electron transfer pathway.</text>
</comment>
<comment type="catalytic activity">
    <reaction evidence="2">
        <text>a ubiquinone + n Na(+)(in) + NADH + H(+) = a ubiquinol + n Na(+)(out) + NAD(+)</text>
        <dbReference type="Rhea" id="RHEA:47748"/>
        <dbReference type="Rhea" id="RHEA-COMP:9565"/>
        <dbReference type="Rhea" id="RHEA-COMP:9566"/>
        <dbReference type="ChEBI" id="CHEBI:15378"/>
        <dbReference type="ChEBI" id="CHEBI:16389"/>
        <dbReference type="ChEBI" id="CHEBI:17976"/>
        <dbReference type="ChEBI" id="CHEBI:29101"/>
        <dbReference type="ChEBI" id="CHEBI:57540"/>
        <dbReference type="ChEBI" id="CHEBI:57945"/>
        <dbReference type="EC" id="7.2.1.1"/>
    </reaction>
</comment>
<comment type="cofactor">
    <cofactor evidence="1">
        <name>[2Fe-2S] cluster</name>
        <dbReference type="ChEBI" id="CHEBI:190135"/>
    </cofactor>
    <text evidence="1">Binds 1 [2Fe-2S] cluster.</text>
</comment>
<comment type="cofactor">
    <cofactor evidence="1">
        <name>FAD</name>
        <dbReference type="ChEBI" id="CHEBI:57692"/>
    </cofactor>
</comment>
<comment type="subunit">
    <text evidence="2">Composed of six subunits; NqrA, NqrB, NqrC, NqrD, NqrE and NqrF.</text>
</comment>
<comment type="subcellular location">
    <subcellularLocation>
        <location evidence="5">Cell inner membrane</location>
    </subcellularLocation>
</comment>
<comment type="similarity">
    <text evidence="5">Belongs to the NqrF family.</text>
</comment>
<accession>Q9LCI9</accession>
<protein>
    <recommendedName>
        <fullName>Na(+)-translocating NADH-quinone reductase subunit F</fullName>
        <shortName>Na(+)-NQR subunit F</shortName>
        <shortName>Na(+)-translocating NQR subunit F</shortName>
        <ecNumber evidence="2">7.2.1.1</ecNumber>
    </recommendedName>
    <alternativeName>
        <fullName>NQR complex subunit F</fullName>
    </alternativeName>
    <alternativeName>
        <fullName>NQR-1 subunit F</fullName>
    </alternativeName>
</protein>
<evidence type="ECO:0000250" key="1">
    <source>
        <dbReference type="UniProtKB" id="A5F5Y4"/>
    </source>
</evidence>
<evidence type="ECO:0000250" key="2">
    <source>
        <dbReference type="UniProtKB" id="Q56584"/>
    </source>
</evidence>
<evidence type="ECO:0000255" key="3">
    <source>
        <dbReference type="PROSITE-ProRule" id="PRU00465"/>
    </source>
</evidence>
<evidence type="ECO:0000255" key="4">
    <source>
        <dbReference type="PROSITE-ProRule" id="PRU00716"/>
    </source>
</evidence>
<evidence type="ECO:0000305" key="5"/>
<keyword id="KW-0001">2Fe-2S</keyword>
<keyword id="KW-0997">Cell inner membrane</keyword>
<keyword id="KW-1003">Cell membrane</keyword>
<keyword id="KW-0274">FAD</keyword>
<keyword id="KW-0285">Flavoprotein</keyword>
<keyword id="KW-0406">Ion transport</keyword>
<keyword id="KW-0408">Iron</keyword>
<keyword id="KW-0411">Iron-sulfur</keyword>
<keyword id="KW-0472">Membrane</keyword>
<keyword id="KW-0479">Metal-binding</keyword>
<keyword id="KW-0520">NAD</keyword>
<keyword id="KW-0915">Sodium</keyword>
<keyword id="KW-0739">Sodium transport</keyword>
<keyword id="KW-1278">Translocase</keyword>
<keyword id="KW-0813">Transport</keyword>
<keyword id="KW-0830">Ubiquinone</keyword>
<sequence length="303" mass="34191">GGSCGQCRVKVKSGGGDILPTELDHISKGEAREGERLSCQVSVKVDMDIELPEEIFGVKKWECEVISNDNKATFIKELKMAIPNGEVVPFRAGGYIQIEAPAHHVKYSDYDIPEEYRGDWQHFGFFDVESKVDEDTIRAYSMANCPEEAGIIMLNVRIATPPPRDLSLPAGKMSSYIFSLKAGDKVTISGPFGEFFAKETDNEMVFVGGGAGMAPMRSHIFDQLNRLDTKRKVSFWYGARSKREMFYVEDFDMLAKENENFEWHVALSDPQPEDNWEGYTGFIHNVILENYLGNHEAPEDCEY</sequence>
<name>NQRF_MORMI</name>
<reference key="1">
    <citation type="journal article" date="2000" name="Can. J. Microbiol.">
        <title>Detection of the Na(+)-translocating NADH-quinone reductase in marine bacteria using a PCR technique.</title>
        <authorList>
            <person name="Kato S."/>
            <person name="Yumoto I."/>
        </authorList>
    </citation>
    <scope>NUCLEOTIDE SEQUENCE [GENOMIC DNA]</scope>
    <source>
        <strain>ATCC 15381 / BCRC 15891 / CIP 102861 / NCIMB 1144 / MP-1</strain>
    </source>
</reference>
<dbReference type="EC" id="7.2.1.1" evidence="2"/>
<dbReference type="EMBL" id="AB024726">
    <property type="protein sequence ID" value="BAA83763.1"/>
    <property type="molecule type" value="Genomic_DNA"/>
</dbReference>
<dbReference type="SMR" id="Q9LCI9"/>
<dbReference type="GO" id="GO:0005886">
    <property type="term" value="C:plasma membrane"/>
    <property type="evidence" value="ECO:0007669"/>
    <property type="project" value="UniProtKB-SubCell"/>
</dbReference>
<dbReference type="GO" id="GO:0051537">
    <property type="term" value="F:2 iron, 2 sulfur cluster binding"/>
    <property type="evidence" value="ECO:0007669"/>
    <property type="project" value="UniProtKB-KW"/>
</dbReference>
<dbReference type="GO" id="GO:0046872">
    <property type="term" value="F:metal ion binding"/>
    <property type="evidence" value="ECO:0007669"/>
    <property type="project" value="UniProtKB-KW"/>
</dbReference>
<dbReference type="GO" id="GO:0016655">
    <property type="term" value="F:oxidoreductase activity, acting on NAD(P)H, quinone or similar compound as acceptor"/>
    <property type="evidence" value="ECO:0007669"/>
    <property type="project" value="InterPro"/>
</dbReference>
<dbReference type="GO" id="GO:0006814">
    <property type="term" value="P:sodium ion transport"/>
    <property type="evidence" value="ECO:0007669"/>
    <property type="project" value="UniProtKB-KW"/>
</dbReference>
<dbReference type="CDD" id="cd00207">
    <property type="entry name" value="fer2"/>
    <property type="match status" value="1"/>
</dbReference>
<dbReference type="CDD" id="cd06188">
    <property type="entry name" value="NADH_quinone_reductase"/>
    <property type="match status" value="1"/>
</dbReference>
<dbReference type="FunFam" id="2.40.30.10:FF:000064">
    <property type="entry name" value="Na(+)-translocating NADH-quinone reductase subunit F"/>
    <property type="match status" value="1"/>
</dbReference>
<dbReference type="FunFam" id="3.40.50.80:FF:000014">
    <property type="entry name" value="Na(+)-translocating NADH-quinone reductase subunit F"/>
    <property type="match status" value="1"/>
</dbReference>
<dbReference type="Gene3D" id="3.10.20.30">
    <property type="match status" value="1"/>
</dbReference>
<dbReference type="Gene3D" id="3.40.50.80">
    <property type="entry name" value="Nucleotide-binding domain of ferredoxin-NADP reductase (FNR) module"/>
    <property type="match status" value="1"/>
</dbReference>
<dbReference type="Gene3D" id="2.40.30.10">
    <property type="entry name" value="Translation factors"/>
    <property type="match status" value="1"/>
</dbReference>
<dbReference type="InterPro" id="IPR036010">
    <property type="entry name" value="2Fe-2S_ferredoxin-like_sf"/>
</dbReference>
<dbReference type="InterPro" id="IPR001041">
    <property type="entry name" value="2Fe-2S_ferredoxin-type"/>
</dbReference>
<dbReference type="InterPro" id="IPR012675">
    <property type="entry name" value="Beta-grasp_dom_sf"/>
</dbReference>
<dbReference type="InterPro" id="IPR008333">
    <property type="entry name" value="Cbr1-like_FAD-bd_dom"/>
</dbReference>
<dbReference type="InterPro" id="IPR017927">
    <property type="entry name" value="FAD-bd_FR_type"/>
</dbReference>
<dbReference type="InterPro" id="IPR039261">
    <property type="entry name" value="FNR_nucleotide-bd"/>
</dbReference>
<dbReference type="InterPro" id="IPR010205">
    <property type="entry name" value="NqrF"/>
</dbReference>
<dbReference type="InterPro" id="IPR001433">
    <property type="entry name" value="OxRdtase_FAD/NAD-bd"/>
</dbReference>
<dbReference type="InterPro" id="IPR017938">
    <property type="entry name" value="Riboflavin_synthase-like_b-brl"/>
</dbReference>
<dbReference type="NCBIfam" id="TIGR01941">
    <property type="entry name" value="nqrF"/>
    <property type="match status" value="1"/>
</dbReference>
<dbReference type="PANTHER" id="PTHR43644">
    <property type="entry name" value="NA(+)-TRANSLOCATING NADH-QUINONE REDUCTASE SUBUNIT"/>
    <property type="match status" value="1"/>
</dbReference>
<dbReference type="PANTHER" id="PTHR43644:SF1">
    <property type="entry name" value="NAD(P)H-FLAVIN REDUCTASE"/>
    <property type="match status" value="1"/>
</dbReference>
<dbReference type="Pfam" id="PF00970">
    <property type="entry name" value="FAD_binding_6"/>
    <property type="match status" value="1"/>
</dbReference>
<dbReference type="Pfam" id="PF00175">
    <property type="entry name" value="NAD_binding_1"/>
    <property type="match status" value="1"/>
</dbReference>
<dbReference type="SUPFAM" id="SSF54292">
    <property type="entry name" value="2Fe-2S ferredoxin-like"/>
    <property type="match status" value="1"/>
</dbReference>
<dbReference type="SUPFAM" id="SSF52343">
    <property type="entry name" value="Ferredoxin reductase-like, C-terminal NADP-linked domain"/>
    <property type="match status" value="1"/>
</dbReference>
<dbReference type="SUPFAM" id="SSF63380">
    <property type="entry name" value="Riboflavin synthase domain-like"/>
    <property type="match status" value="1"/>
</dbReference>
<dbReference type="PROSITE" id="PS51085">
    <property type="entry name" value="2FE2S_FER_2"/>
    <property type="match status" value="1"/>
</dbReference>
<dbReference type="PROSITE" id="PS51384">
    <property type="entry name" value="FAD_FR"/>
    <property type="match status" value="1"/>
</dbReference>
<organism>
    <name type="scientific">Moritella marina</name>
    <name type="common">Vibrio marinus</name>
    <dbReference type="NCBI Taxonomy" id="90736"/>
    <lineage>
        <taxon>Bacteria</taxon>
        <taxon>Pseudomonadati</taxon>
        <taxon>Pseudomonadota</taxon>
        <taxon>Gammaproteobacteria</taxon>
        <taxon>Alteromonadales</taxon>
        <taxon>Moritellaceae</taxon>
        <taxon>Moritella</taxon>
    </lineage>
</organism>